<organism>
    <name type="scientific">Cryptococcus neoformans var. neoformans serotype D (strain B-3501A)</name>
    <name type="common">Filobasidiella neoformans</name>
    <dbReference type="NCBI Taxonomy" id="283643"/>
    <lineage>
        <taxon>Eukaryota</taxon>
        <taxon>Fungi</taxon>
        <taxon>Dikarya</taxon>
        <taxon>Basidiomycota</taxon>
        <taxon>Agaricomycotina</taxon>
        <taxon>Tremellomycetes</taxon>
        <taxon>Tremellales</taxon>
        <taxon>Cryptococcaceae</taxon>
        <taxon>Cryptococcus</taxon>
        <taxon>Cryptococcus neoformans species complex</taxon>
    </lineage>
</organism>
<sequence length="1104" mass="120467">MLPLRAFARLAQRPRLSRPTQLARSSLPRPSPSRPAAHYLALAPAPSTRFLHSSPPVLKEKRWLNNTPPEDDGEDGQNPKQDDQVEKPLPDAESSKSAEERAKSQSSKPDIKASSSDSVSSSAPAPGSADGGSPPGAGGPKEVAKPVIPEIYPQVLAIPITHRPLFPGFYKAVTVRSPPVIKAIRELQAHGQPYVGAFLLKDSTVDSDVVTDINQVQPVGVFCQITSCFTSQEGEGKPEALTAVLFPHRRIKINELVKSSGTKGDGTVGVGGLVEGSQDSAKGEGEVKSFESEVPGVEEVREELGTVSIDSEQPDVHKENRDLETKEVTQIDFLHSLLPQVSLTNVSNLSTEPYEKDSQVIRAIMSELISVFKEIAQLQPMFREQVTSFAISNTSSQVFDEPDKLADLAAVVSTADVSDLQAVLSSTSIEDRLQRALVLLKKELINAQLQFKISRDVDTKIQKRQREYYLMEQLKGIKKELGMESDGKDKLVEGFKEKASKLAMPEGVRKVFDEELNKLVHLEPAASEFNVTRNYIDWLTQVPWGVHTPENYNISHAIKILDEDHYGLKDVKDRILEFMAIGKLRGSVEGKILCLVGPPGVGKTSIGKSIAKALGRQFFRFSVGGLTDVAEIKGHRRTYIGAMPGKPIQALKKVATENPLILIDEVDKISKAYNGDPASALLEMLDPEQNKSFLDHYLDVPIDLSKVLFVCTANVLETIPGPLLDRMEVLEVSGYVSAEKMNIAERYLSPQAKVAAGLEDVNIELEPGAIEALIRYYCRESGVRNLKKHIDKIYRKAAFKIVTDLGESGLPEPATPPAENQVEAQYPDIKPASELTSNVIPGTEVSGVDTKTDVTTVPREPMKVPAGIHVKVTQENLKDYVGPPLYHKDRLYTHSPPAGVSTGLGYLGNGSGAVMPVEINSMPGKGNLQLTGKLGEVIRESAQIAMSWVKSNAYLLGITKSEAEATLNDRDVHLHMPEGGIGKEGPSAGTAILTAFVSLFTKTRVDPDIAMTGEISLLGQVLPVGGLKEKILAAHRAGIKKLIVPAGCKPDIDENVPESVKGGIEFVFVEDVRQVLHEAFRGTEVEKRWQETLPMEEEPQRERH</sequence>
<dbReference type="EC" id="3.4.21.53" evidence="1"/>
<dbReference type="EMBL" id="AAEY01000020">
    <property type="protein sequence ID" value="EAL21187.1"/>
    <property type="molecule type" value="Genomic_DNA"/>
</dbReference>
<dbReference type="RefSeq" id="XP_775834.1">
    <property type="nucleotide sequence ID" value="XM_770741.1"/>
</dbReference>
<dbReference type="SMR" id="P0CQ17"/>
<dbReference type="GeneID" id="4935633"/>
<dbReference type="KEGG" id="cnb:CNBD2440"/>
<dbReference type="VEuPathDB" id="FungiDB:CNBD2440"/>
<dbReference type="HOGENOM" id="CLU_004109_1_0_1"/>
<dbReference type="OrthoDB" id="5530at5206"/>
<dbReference type="GO" id="GO:0005759">
    <property type="term" value="C:mitochondrial matrix"/>
    <property type="evidence" value="ECO:0007669"/>
    <property type="project" value="UniProtKB-SubCell"/>
</dbReference>
<dbReference type="GO" id="GO:0005524">
    <property type="term" value="F:ATP binding"/>
    <property type="evidence" value="ECO:0007669"/>
    <property type="project" value="UniProtKB-UniRule"/>
</dbReference>
<dbReference type="GO" id="GO:0016887">
    <property type="term" value="F:ATP hydrolysis activity"/>
    <property type="evidence" value="ECO:0007669"/>
    <property type="project" value="UniProtKB-UniRule"/>
</dbReference>
<dbReference type="GO" id="GO:0004176">
    <property type="term" value="F:ATP-dependent peptidase activity"/>
    <property type="evidence" value="ECO:0007669"/>
    <property type="project" value="UniProtKB-UniRule"/>
</dbReference>
<dbReference type="GO" id="GO:0043565">
    <property type="term" value="F:sequence-specific DNA binding"/>
    <property type="evidence" value="ECO:0007669"/>
    <property type="project" value="UniProtKB-UniRule"/>
</dbReference>
<dbReference type="GO" id="GO:0004252">
    <property type="term" value="F:serine-type endopeptidase activity"/>
    <property type="evidence" value="ECO:0007669"/>
    <property type="project" value="UniProtKB-UniRule"/>
</dbReference>
<dbReference type="GO" id="GO:0003697">
    <property type="term" value="F:single-stranded DNA binding"/>
    <property type="evidence" value="ECO:0007669"/>
    <property type="project" value="TreeGrafter"/>
</dbReference>
<dbReference type="GO" id="GO:0034599">
    <property type="term" value="P:cellular response to oxidative stress"/>
    <property type="evidence" value="ECO:0007669"/>
    <property type="project" value="UniProtKB-UniRule"/>
</dbReference>
<dbReference type="GO" id="GO:0051131">
    <property type="term" value="P:chaperone-mediated protein complex assembly"/>
    <property type="evidence" value="ECO:0007669"/>
    <property type="project" value="UniProtKB-UniRule"/>
</dbReference>
<dbReference type="GO" id="GO:0007005">
    <property type="term" value="P:mitochondrion organization"/>
    <property type="evidence" value="ECO:0007669"/>
    <property type="project" value="TreeGrafter"/>
</dbReference>
<dbReference type="GO" id="GO:0070407">
    <property type="term" value="P:oxidation-dependent protein catabolic process"/>
    <property type="evidence" value="ECO:0007669"/>
    <property type="project" value="UniProtKB-UniRule"/>
</dbReference>
<dbReference type="GO" id="GO:0006515">
    <property type="term" value="P:protein quality control for misfolded or incompletely synthesized proteins"/>
    <property type="evidence" value="ECO:0007669"/>
    <property type="project" value="UniProtKB-UniRule"/>
</dbReference>
<dbReference type="CDD" id="cd19500">
    <property type="entry name" value="RecA-like_Lon"/>
    <property type="match status" value="1"/>
</dbReference>
<dbReference type="FunFam" id="3.40.50.300:FF:000021">
    <property type="entry name" value="Lon protease homolog"/>
    <property type="match status" value="1"/>
</dbReference>
<dbReference type="FunFam" id="3.30.230.10:FF:000019">
    <property type="entry name" value="Lon protease homolog 2, peroxisomal"/>
    <property type="match status" value="1"/>
</dbReference>
<dbReference type="FunFam" id="1.10.8.60:FF:000113">
    <property type="entry name" value="Lon protease homolog, mitochondrial"/>
    <property type="match status" value="1"/>
</dbReference>
<dbReference type="FunFam" id="1.20.5.5270:FF:000001">
    <property type="entry name" value="Lon protease homolog, mitochondrial"/>
    <property type="match status" value="1"/>
</dbReference>
<dbReference type="FunFam" id="1.20.58.1480:FF:000009">
    <property type="entry name" value="Lon protease homolog, mitochondrial"/>
    <property type="match status" value="1"/>
</dbReference>
<dbReference type="FunFam" id="2.30.130.40:FF:000010">
    <property type="entry name" value="Lon protease homolog, mitochondrial"/>
    <property type="match status" value="1"/>
</dbReference>
<dbReference type="Gene3D" id="1.10.8.60">
    <property type="match status" value="1"/>
</dbReference>
<dbReference type="Gene3D" id="1.20.5.5270">
    <property type="match status" value="1"/>
</dbReference>
<dbReference type="Gene3D" id="1.20.58.1480">
    <property type="match status" value="1"/>
</dbReference>
<dbReference type="Gene3D" id="3.30.230.10">
    <property type="match status" value="1"/>
</dbReference>
<dbReference type="Gene3D" id="2.30.130.40">
    <property type="entry name" value="LON domain-like"/>
    <property type="match status" value="1"/>
</dbReference>
<dbReference type="Gene3D" id="3.40.50.300">
    <property type="entry name" value="P-loop containing nucleotide triphosphate hydrolases"/>
    <property type="match status" value="1"/>
</dbReference>
<dbReference type="HAMAP" id="MF_03120">
    <property type="entry name" value="lonm_euk"/>
    <property type="match status" value="1"/>
</dbReference>
<dbReference type="InterPro" id="IPR003593">
    <property type="entry name" value="AAA+_ATPase"/>
</dbReference>
<dbReference type="InterPro" id="IPR003959">
    <property type="entry name" value="ATPase_AAA_core"/>
</dbReference>
<dbReference type="InterPro" id="IPR004815">
    <property type="entry name" value="Lon_bac/euk-typ"/>
</dbReference>
<dbReference type="InterPro" id="IPR054594">
    <property type="entry name" value="Lon_lid"/>
</dbReference>
<dbReference type="InterPro" id="IPR008269">
    <property type="entry name" value="Lon_proteolytic"/>
</dbReference>
<dbReference type="InterPro" id="IPR027065">
    <property type="entry name" value="Lon_Prtase"/>
</dbReference>
<dbReference type="InterPro" id="IPR003111">
    <property type="entry name" value="Lon_prtase_N"/>
</dbReference>
<dbReference type="InterPro" id="IPR046336">
    <property type="entry name" value="Lon_prtase_N_sf"/>
</dbReference>
<dbReference type="InterPro" id="IPR027503">
    <property type="entry name" value="Lonm_euk"/>
</dbReference>
<dbReference type="InterPro" id="IPR027417">
    <property type="entry name" value="P-loop_NTPase"/>
</dbReference>
<dbReference type="InterPro" id="IPR015947">
    <property type="entry name" value="PUA-like_sf"/>
</dbReference>
<dbReference type="InterPro" id="IPR020568">
    <property type="entry name" value="Ribosomal_Su5_D2-typ_SF"/>
</dbReference>
<dbReference type="InterPro" id="IPR014721">
    <property type="entry name" value="Ribsml_uS5_D2-typ_fold_subgr"/>
</dbReference>
<dbReference type="NCBIfam" id="TIGR00763">
    <property type="entry name" value="lon"/>
    <property type="match status" value="1"/>
</dbReference>
<dbReference type="PANTHER" id="PTHR43718">
    <property type="entry name" value="LON PROTEASE"/>
    <property type="match status" value="1"/>
</dbReference>
<dbReference type="PANTHER" id="PTHR43718:SF2">
    <property type="entry name" value="LON PROTEASE HOMOLOG, MITOCHONDRIAL"/>
    <property type="match status" value="1"/>
</dbReference>
<dbReference type="Pfam" id="PF00004">
    <property type="entry name" value="AAA"/>
    <property type="match status" value="1"/>
</dbReference>
<dbReference type="Pfam" id="PF05362">
    <property type="entry name" value="Lon_C"/>
    <property type="match status" value="1"/>
</dbReference>
<dbReference type="Pfam" id="PF22667">
    <property type="entry name" value="Lon_lid"/>
    <property type="match status" value="1"/>
</dbReference>
<dbReference type="Pfam" id="PF02190">
    <property type="entry name" value="LON_substr_bdg"/>
    <property type="match status" value="1"/>
</dbReference>
<dbReference type="PRINTS" id="PR00830">
    <property type="entry name" value="ENDOLAPTASE"/>
</dbReference>
<dbReference type="SMART" id="SM00382">
    <property type="entry name" value="AAA"/>
    <property type="match status" value="1"/>
</dbReference>
<dbReference type="SMART" id="SM00464">
    <property type="entry name" value="LON"/>
    <property type="match status" value="1"/>
</dbReference>
<dbReference type="SUPFAM" id="SSF52540">
    <property type="entry name" value="P-loop containing nucleoside triphosphate hydrolases"/>
    <property type="match status" value="1"/>
</dbReference>
<dbReference type="SUPFAM" id="SSF88697">
    <property type="entry name" value="PUA domain-like"/>
    <property type="match status" value="1"/>
</dbReference>
<dbReference type="SUPFAM" id="SSF54211">
    <property type="entry name" value="Ribosomal protein S5 domain 2-like"/>
    <property type="match status" value="1"/>
</dbReference>
<dbReference type="PROSITE" id="PS51787">
    <property type="entry name" value="LON_N"/>
    <property type="match status" value="1"/>
</dbReference>
<dbReference type="PROSITE" id="PS51786">
    <property type="entry name" value="LON_PROTEOLYTIC"/>
    <property type="match status" value="1"/>
</dbReference>
<evidence type="ECO:0000255" key="1">
    <source>
        <dbReference type="HAMAP-Rule" id="MF_03120"/>
    </source>
</evidence>
<evidence type="ECO:0000255" key="2">
    <source>
        <dbReference type="PROSITE-ProRule" id="PRU01122"/>
    </source>
</evidence>
<evidence type="ECO:0000255" key="3">
    <source>
        <dbReference type="PROSITE-ProRule" id="PRU01123"/>
    </source>
</evidence>
<evidence type="ECO:0000256" key="4">
    <source>
        <dbReference type="SAM" id="MobiDB-lite"/>
    </source>
</evidence>
<proteinExistence type="inferred from homology"/>
<accession>P0CQ17</accession>
<accession>Q55U62</accession>
<accession>Q5KI83</accession>
<protein>
    <recommendedName>
        <fullName evidence="1">Lon protease homolog, mitochondrial</fullName>
        <ecNumber evidence="1">3.4.21.53</ecNumber>
    </recommendedName>
</protein>
<feature type="transit peptide" description="Mitochondrion" evidence="1">
    <location>
        <begin position="1"/>
        <end position="58"/>
    </location>
</feature>
<feature type="chain" id="PRO_0000410218" description="Lon protease homolog, mitochondrial">
    <location>
        <begin position="59"/>
        <end position="1104"/>
    </location>
</feature>
<feature type="domain" description="Lon N-terminal" evidence="3">
    <location>
        <begin position="155"/>
        <end position="444"/>
    </location>
</feature>
<feature type="domain" description="Lon proteolytic" evidence="2">
    <location>
        <begin position="895"/>
        <end position="1082"/>
    </location>
</feature>
<feature type="region of interest" description="Disordered" evidence="4">
    <location>
        <begin position="8"/>
        <end position="144"/>
    </location>
</feature>
<feature type="compositionally biased region" description="Low complexity" evidence="4">
    <location>
        <begin position="22"/>
        <end position="46"/>
    </location>
</feature>
<feature type="compositionally biased region" description="Basic and acidic residues" evidence="4">
    <location>
        <begin position="80"/>
        <end position="103"/>
    </location>
</feature>
<feature type="compositionally biased region" description="Low complexity" evidence="4">
    <location>
        <begin position="104"/>
        <end position="128"/>
    </location>
</feature>
<feature type="compositionally biased region" description="Gly residues" evidence="4">
    <location>
        <begin position="129"/>
        <end position="139"/>
    </location>
</feature>
<feature type="active site" evidence="1">
    <location>
        <position position="987"/>
    </location>
</feature>
<feature type="active site" evidence="1">
    <location>
        <position position="1030"/>
    </location>
</feature>
<feature type="binding site" evidence="1">
    <location>
        <begin position="597"/>
        <end position="604"/>
    </location>
    <ligand>
        <name>ATP</name>
        <dbReference type="ChEBI" id="CHEBI:30616"/>
    </ligand>
</feature>
<reference key="1">
    <citation type="journal article" date="2005" name="Science">
        <title>The genome of the basidiomycetous yeast and human pathogen Cryptococcus neoformans.</title>
        <authorList>
            <person name="Loftus B.J."/>
            <person name="Fung E."/>
            <person name="Roncaglia P."/>
            <person name="Rowley D."/>
            <person name="Amedeo P."/>
            <person name="Bruno D."/>
            <person name="Vamathevan J."/>
            <person name="Miranda M."/>
            <person name="Anderson I.J."/>
            <person name="Fraser J.A."/>
            <person name="Allen J.E."/>
            <person name="Bosdet I.E."/>
            <person name="Brent M.R."/>
            <person name="Chiu R."/>
            <person name="Doering T.L."/>
            <person name="Donlin M.J."/>
            <person name="D'Souza C.A."/>
            <person name="Fox D.S."/>
            <person name="Grinberg V."/>
            <person name="Fu J."/>
            <person name="Fukushima M."/>
            <person name="Haas B.J."/>
            <person name="Huang J.C."/>
            <person name="Janbon G."/>
            <person name="Jones S.J.M."/>
            <person name="Koo H.L."/>
            <person name="Krzywinski M.I."/>
            <person name="Kwon-Chung K.J."/>
            <person name="Lengeler K.B."/>
            <person name="Maiti R."/>
            <person name="Marra M.A."/>
            <person name="Marra R.E."/>
            <person name="Mathewson C.A."/>
            <person name="Mitchell T.G."/>
            <person name="Pertea M."/>
            <person name="Riggs F.R."/>
            <person name="Salzberg S.L."/>
            <person name="Schein J.E."/>
            <person name="Shvartsbeyn A."/>
            <person name="Shin H."/>
            <person name="Shumway M."/>
            <person name="Specht C.A."/>
            <person name="Suh B.B."/>
            <person name="Tenney A."/>
            <person name="Utterback T.R."/>
            <person name="Wickes B.L."/>
            <person name="Wortman J.R."/>
            <person name="Wye N.H."/>
            <person name="Kronstad J.W."/>
            <person name="Lodge J.K."/>
            <person name="Heitman J."/>
            <person name="Davis R.W."/>
            <person name="Fraser C.M."/>
            <person name="Hyman R.W."/>
        </authorList>
    </citation>
    <scope>NUCLEOTIDE SEQUENCE [LARGE SCALE GENOMIC DNA]</scope>
    <source>
        <strain>B-3501A</strain>
    </source>
</reference>
<gene>
    <name evidence="1" type="primary">PIM1</name>
    <name type="ordered locus">CNBD2440</name>
</gene>
<name>LONM_CRYNB</name>
<comment type="function">
    <text evidence="1">ATP-dependent serine protease that mediates the selective degradation of misfolded, unassembled or oxidatively damaged polypeptides as well as certain short-lived regulatory proteins in the mitochondrial matrix. May also have a chaperone function in the assembly of inner membrane protein complexes. Participates in the regulation of mitochondrial gene expression and in the maintenance of the integrity of the mitochondrial genome. Binds to mitochondrial DNA in a site-specific manner.</text>
</comment>
<comment type="catalytic activity">
    <reaction evidence="1">
        <text>Hydrolysis of proteins in presence of ATP.</text>
        <dbReference type="EC" id="3.4.21.53"/>
    </reaction>
</comment>
<comment type="subunit">
    <text evidence="1">Homohexamer or homoheptamer. Organized in a ring with a central cavity.</text>
</comment>
<comment type="subcellular location">
    <subcellularLocation>
        <location evidence="1">Mitochondrion matrix</location>
    </subcellularLocation>
</comment>
<comment type="similarity">
    <text evidence="1">Belongs to the peptidase S16 family.</text>
</comment>
<keyword id="KW-0067">ATP-binding</keyword>
<keyword id="KW-0238">DNA-binding</keyword>
<keyword id="KW-0378">Hydrolase</keyword>
<keyword id="KW-0496">Mitochondrion</keyword>
<keyword id="KW-0547">Nucleotide-binding</keyword>
<keyword id="KW-0645">Protease</keyword>
<keyword id="KW-0720">Serine protease</keyword>
<keyword id="KW-0809">Transit peptide</keyword>